<gene>
    <name evidence="1" type="primary">rimP</name>
    <name type="ordered locus">BF0261</name>
</gene>
<proteinExistence type="inferred from homology"/>
<feature type="chain" id="PRO_0000229220" description="Ribosome maturation factor RimP">
    <location>
        <begin position="1"/>
        <end position="155"/>
    </location>
</feature>
<dbReference type="EMBL" id="AP006841">
    <property type="protein sequence ID" value="BAD47010.1"/>
    <property type="molecule type" value="Genomic_DNA"/>
</dbReference>
<dbReference type="RefSeq" id="WP_005783918.1">
    <property type="nucleotide sequence ID" value="NZ_UYXF01000014.1"/>
</dbReference>
<dbReference type="RefSeq" id="YP_097544.1">
    <property type="nucleotide sequence ID" value="NC_006347.1"/>
</dbReference>
<dbReference type="SMR" id="Q64ZR6"/>
<dbReference type="STRING" id="295405.BF0261"/>
<dbReference type="GeneID" id="60368348"/>
<dbReference type="KEGG" id="bfr:BF0261"/>
<dbReference type="PATRIC" id="fig|295405.11.peg.291"/>
<dbReference type="HOGENOM" id="CLU_070525_3_1_10"/>
<dbReference type="OrthoDB" id="9789702at2"/>
<dbReference type="Proteomes" id="UP000002197">
    <property type="component" value="Chromosome"/>
</dbReference>
<dbReference type="GO" id="GO:0005829">
    <property type="term" value="C:cytosol"/>
    <property type="evidence" value="ECO:0007669"/>
    <property type="project" value="TreeGrafter"/>
</dbReference>
<dbReference type="GO" id="GO:0000028">
    <property type="term" value="P:ribosomal small subunit assembly"/>
    <property type="evidence" value="ECO:0007669"/>
    <property type="project" value="TreeGrafter"/>
</dbReference>
<dbReference type="GO" id="GO:0006412">
    <property type="term" value="P:translation"/>
    <property type="evidence" value="ECO:0007669"/>
    <property type="project" value="TreeGrafter"/>
</dbReference>
<dbReference type="FunFam" id="3.30.300.70:FF:000004">
    <property type="entry name" value="Ribosome maturation factor RimP"/>
    <property type="match status" value="1"/>
</dbReference>
<dbReference type="Gene3D" id="3.30.300.70">
    <property type="entry name" value="RimP-like superfamily, N-terminal"/>
    <property type="match status" value="1"/>
</dbReference>
<dbReference type="HAMAP" id="MF_01077">
    <property type="entry name" value="RimP"/>
    <property type="match status" value="1"/>
</dbReference>
<dbReference type="InterPro" id="IPR003728">
    <property type="entry name" value="Ribosome_maturation_RimP"/>
</dbReference>
<dbReference type="InterPro" id="IPR028998">
    <property type="entry name" value="RimP_C"/>
</dbReference>
<dbReference type="InterPro" id="IPR028989">
    <property type="entry name" value="RimP_N"/>
</dbReference>
<dbReference type="InterPro" id="IPR035956">
    <property type="entry name" value="RimP_N_sf"/>
</dbReference>
<dbReference type="NCBIfam" id="NF002531">
    <property type="entry name" value="PRK02001.1"/>
    <property type="match status" value="1"/>
</dbReference>
<dbReference type="PANTHER" id="PTHR33867">
    <property type="entry name" value="RIBOSOME MATURATION FACTOR RIMP"/>
    <property type="match status" value="1"/>
</dbReference>
<dbReference type="PANTHER" id="PTHR33867:SF1">
    <property type="entry name" value="RIBOSOME MATURATION FACTOR RIMP"/>
    <property type="match status" value="1"/>
</dbReference>
<dbReference type="Pfam" id="PF17384">
    <property type="entry name" value="DUF150_C"/>
    <property type="match status" value="1"/>
</dbReference>
<dbReference type="Pfam" id="PF02576">
    <property type="entry name" value="RimP_N"/>
    <property type="match status" value="1"/>
</dbReference>
<dbReference type="SUPFAM" id="SSF75420">
    <property type="entry name" value="YhbC-like, N-terminal domain"/>
    <property type="match status" value="1"/>
</dbReference>
<evidence type="ECO:0000255" key="1">
    <source>
        <dbReference type="HAMAP-Rule" id="MF_01077"/>
    </source>
</evidence>
<keyword id="KW-0963">Cytoplasm</keyword>
<keyword id="KW-0690">Ribosome biogenesis</keyword>
<reference key="1">
    <citation type="journal article" date="2004" name="Proc. Natl. Acad. Sci. U.S.A.">
        <title>Genomic analysis of Bacteroides fragilis reveals extensive DNA inversions regulating cell surface adaptation.</title>
        <authorList>
            <person name="Kuwahara T."/>
            <person name="Yamashita A."/>
            <person name="Hirakawa H."/>
            <person name="Nakayama H."/>
            <person name="Toh H."/>
            <person name="Okada N."/>
            <person name="Kuhara S."/>
            <person name="Hattori M."/>
            <person name="Hayashi T."/>
            <person name="Ohnishi Y."/>
        </authorList>
    </citation>
    <scope>NUCLEOTIDE SEQUENCE [LARGE SCALE GENOMIC DNA]</scope>
    <source>
        <strain>YCH46</strain>
    </source>
</reference>
<comment type="function">
    <text evidence="1">Required for maturation of 30S ribosomal subunits.</text>
</comment>
<comment type="subcellular location">
    <subcellularLocation>
        <location evidence="1">Cytoplasm</location>
    </subcellularLocation>
</comment>
<comment type="similarity">
    <text evidence="1">Belongs to the RimP family.</text>
</comment>
<organism>
    <name type="scientific">Bacteroides fragilis (strain YCH46)</name>
    <dbReference type="NCBI Taxonomy" id="295405"/>
    <lineage>
        <taxon>Bacteria</taxon>
        <taxon>Pseudomonadati</taxon>
        <taxon>Bacteroidota</taxon>
        <taxon>Bacteroidia</taxon>
        <taxon>Bacteroidales</taxon>
        <taxon>Bacteroidaceae</taxon>
        <taxon>Bacteroides</taxon>
    </lineage>
</organism>
<protein>
    <recommendedName>
        <fullName evidence="1">Ribosome maturation factor RimP</fullName>
    </recommendedName>
</protein>
<name>RIMP_BACFR</name>
<accession>Q64ZR6</accession>
<sequence length="155" mass="17996">MIEKRTVCQIVEEWLEDKDYFLVEVTVSPDDKIVVEIDHAEGVWIEDCVELSRFIESKLNREEEDYELEVGSAGIGQPFKVLQQYYNHIGLEVEVLTKGGRKLSGVLKDADEEKFVVTVQKKVKPEGAKRPQLVEEDETFTYDDIKYTKYLISFK</sequence>